<gene>
    <name evidence="1" type="primary">lpoB</name>
    <name type="ordered locus">PANA_1495</name>
</gene>
<protein>
    <recommendedName>
        <fullName evidence="1">Penicillin-binding protein activator LpoB</fullName>
        <shortName evidence="1">PBP activator LpoB</shortName>
    </recommendedName>
</protein>
<reference key="1">
    <citation type="journal article" date="2010" name="J. Bacteriol.">
        <title>Genome sequence of Pantoea ananatis LMG20103, the causative agent of Eucalyptus blight and dieback.</title>
        <authorList>
            <person name="De Maayer P."/>
            <person name="Chan W.Y."/>
            <person name="Venter S.N."/>
            <person name="Toth I.K."/>
            <person name="Birch P.R."/>
            <person name="Joubert F."/>
            <person name="Coutinho T.A."/>
        </authorList>
    </citation>
    <scope>NUCLEOTIDE SEQUENCE [LARGE SCALE GENOMIC DNA]</scope>
    <source>
        <strain>LMG 20103</strain>
    </source>
</reference>
<comment type="function">
    <text evidence="1">Regulator of peptidoglycan synthesis that is essential for the function of penicillin-binding protein 1B (PBP1b).</text>
</comment>
<comment type="subunit">
    <text evidence="1">Interacts with PBP1b.</text>
</comment>
<comment type="subcellular location">
    <subcellularLocation>
        <location evidence="1">Cell outer membrane</location>
        <topology evidence="1">Lipid-anchor</topology>
        <orientation evidence="1">Periplasmic side</orientation>
    </subcellularLocation>
</comment>
<comment type="similarity">
    <text evidence="1">Belongs to the LpoB family.</text>
</comment>
<organism>
    <name type="scientific">Pantoea ananatis (strain LMG 20103)</name>
    <dbReference type="NCBI Taxonomy" id="706191"/>
    <lineage>
        <taxon>Bacteria</taxon>
        <taxon>Pseudomonadati</taxon>
        <taxon>Pseudomonadota</taxon>
        <taxon>Gammaproteobacteria</taxon>
        <taxon>Enterobacterales</taxon>
        <taxon>Erwiniaceae</taxon>
        <taxon>Pantoea</taxon>
    </lineage>
</organism>
<dbReference type="EMBL" id="CP001875">
    <property type="protein sequence ID" value="ADD76662.1"/>
    <property type="molecule type" value="Genomic_DNA"/>
</dbReference>
<dbReference type="RefSeq" id="WP_013025378.1">
    <property type="nucleotide sequence ID" value="NC_013956.2"/>
</dbReference>
<dbReference type="SMR" id="D4GC59"/>
<dbReference type="STRING" id="706191.PANA_1495"/>
<dbReference type="GeneID" id="57268698"/>
<dbReference type="KEGG" id="pam:PANA_1495"/>
<dbReference type="eggNOG" id="COG3417">
    <property type="taxonomic scope" value="Bacteria"/>
</dbReference>
<dbReference type="HOGENOM" id="CLU_092328_0_0_6"/>
<dbReference type="Proteomes" id="UP000001702">
    <property type="component" value="Chromosome"/>
</dbReference>
<dbReference type="GO" id="GO:0031241">
    <property type="term" value="C:periplasmic side of cell outer membrane"/>
    <property type="evidence" value="ECO:0007669"/>
    <property type="project" value="UniProtKB-UniRule"/>
</dbReference>
<dbReference type="GO" id="GO:0030234">
    <property type="term" value="F:enzyme regulator activity"/>
    <property type="evidence" value="ECO:0007669"/>
    <property type="project" value="UniProtKB-UniRule"/>
</dbReference>
<dbReference type="GO" id="GO:0009252">
    <property type="term" value="P:peptidoglycan biosynthetic process"/>
    <property type="evidence" value="ECO:0007669"/>
    <property type="project" value="UniProtKB-UniRule"/>
</dbReference>
<dbReference type="GO" id="GO:0008360">
    <property type="term" value="P:regulation of cell shape"/>
    <property type="evidence" value="ECO:0007669"/>
    <property type="project" value="UniProtKB-KW"/>
</dbReference>
<dbReference type="Gene3D" id="3.40.50.10610">
    <property type="entry name" value="ABC-type transport auxiliary lipoprotein component"/>
    <property type="match status" value="1"/>
</dbReference>
<dbReference type="HAMAP" id="MF_01889">
    <property type="entry name" value="LpoB"/>
    <property type="match status" value="1"/>
</dbReference>
<dbReference type="InterPro" id="IPR014094">
    <property type="entry name" value="LpoB"/>
</dbReference>
<dbReference type="NCBIfam" id="TIGR02722">
    <property type="entry name" value="lp"/>
    <property type="match status" value="1"/>
</dbReference>
<dbReference type="PANTHER" id="PTHR40593">
    <property type="entry name" value="PENICILLIN-BINDING PROTEIN ACTIVATOR LPOB"/>
    <property type="match status" value="1"/>
</dbReference>
<dbReference type="PANTHER" id="PTHR40593:SF1">
    <property type="entry name" value="PENICILLIN-BINDING PROTEIN ACTIVATOR LPOB"/>
    <property type="match status" value="1"/>
</dbReference>
<dbReference type="Pfam" id="PF13036">
    <property type="entry name" value="LpoB"/>
    <property type="match status" value="1"/>
</dbReference>
<dbReference type="PROSITE" id="PS51257">
    <property type="entry name" value="PROKAR_LIPOPROTEIN"/>
    <property type="match status" value="1"/>
</dbReference>
<sequence>MIRSVNRTGALMMALILSGCVMKQQQPAPVEPTQPVEPVQPVPQPEQPIPQPQPVPQPPKLVTINWDASVEPLVAQMVRAATVTPGSVLLVDRIKNSTNGALQGEKATSAIQNALNNNGKFTLVSSEQLAQAKQTLGLSPDDSLNSRSKAIGLARNLNAQYVLYSTAKGDVKSPTLQMQLMLVQTGEIIWSGNGVAQN</sequence>
<name>LPOB_PANAM</name>
<keyword id="KW-0998">Cell outer membrane</keyword>
<keyword id="KW-0133">Cell shape</keyword>
<keyword id="KW-0449">Lipoprotein</keyword>
<keyword id="KW-0472">Membrane</keyword>
<keyword id="KW-0564">Palmitate</keyword>
<keyword id="KW-0573">Peptidoglycan synthesis</keyword>
<keyword id="KW-1185">Reference proteome</keyword>
<keyword id="KW-0732">Signal</keyword>
<feature type="signal peptide" evidence="1">
    <location>
        <begin position="1"/>
        <end position="19"/>
    </location>
</feature>
<feature type="chain" id="PRO_0000405786" description="Penicillin-binding protein activator LpoB">
    <location>
        <begin position="20"/>
        <end position="198"/>
    </location>
</feature>
<feature type="region of interest" description="Disordered" evidence="2">
    <location>
        <begin position="26"/>
        <end position="59"/>
    </location>
</feature>
<feature type="compositionally biased region" description="Low complexity" evidence="2">
    <location>
        <begin position="26"/>
        <end position="37"/>
    </location>
</feature>
<feature type="compositionally biased region" description="Pro residues" evidence="2">
    <location>
        <begin position="38"/>
        <end position="59"/>
    </location>
</feature>
<feature type="lipid moiety-binding region" description="N-palmitoyl cysteine" evidence="1">
    <location>
        <position position="20"/>
    </location>
</feature>
<feature type="lipid moiety-binding region" description="S-diacylglycerol cysteine" evidence="1">
    <location>
        <position position="20"/>
    </location>
</feature>
<proteinExistence type="inferred from homology"/>
<accession>D4GC59</accession>
<evidence type="ECO:0000255" key="1">
    <source>
        <dbReference type="HAMAP-Rule" id="MF_01889"/>
    </source>
</evidence>
<evidence type="ECO:0000256" key="2">
    <source>
        <dbReference type="SAM" id="MobiDB-lite"/>
    </source>
</evidence>